<accession>Q4UWF9</accession>
<evidence type="ECO:0000255" key="1">
    <source>
        <dbReference type="HAMAP-Rule" id="MF_00146"/>
    </source>
</evidence>
<keyword id="KW-0378">Hydrolase</keyword>
<keyword id="KW-0546">Nucleotide metabolism</keyword>
<keyword id="KW-0547">Nucleotide-binding</keyword>
<name>DCD_XANC8</name>
<dbReference type="EC" id="3.5.4.13" evidence="1"/>
<dbReference type="EMBL" id="CP000050">
    <property type="protein sequence ID" value="AAY48614.1"/>
    <property type="molecule type" value="Genomic_DNA"/>
</dbReference>
<dbReference type="RefSeq" id="WP_011037700.1">
    <property type="nucleotide sequence ID" value="NZ_CP155948.1"/>
</dbReference>
<dbReference type="SMR" id="Q4UWF9"/>
<dbReference type="KEGG" id="xcb:XC_1548"/>
<dbReference type="HOGENOM" id="CLU_087476_4_0_6"/>
<dbReference type="UniPathway" id="UPA00610">
    <property type="reaction ID" value="UER00665"/>
</dbReference>
<dbReference type="Proteomes" id="UP000000420">
    <property type="component" value="Chromosome"/>
</dbReference>
<dbReference type="GO" id="GO:0008829">
    <property type="term" value="F:dCTP deaminase activity"/>
    <property type="evidence" value="ECO:0007669"/>
    <property type="project" value="UniProtKB-UniRule"/>
</dbReference>
<dbReference type="GO" id="GO:0000166">
    <property type="term" value="F:nucleotide binding"/>
    <property type="evidence" value="ECO:0007669"/>
    <property type="project" value="UniProtKB-KW"/>
</dbReference>
<dbReference type="GO" id="GO:0006226">
    <property type="term" value="P:dUMP biosynthetic process"/>
    <property type="evidence" value="ECO:0007669"/>
    <property type="project" value="UniProtKB-UniPathway"/>
</dbReference>
<dbReference type="GO" id="GO:0006229">
    <property type="term" value="P:dUTP biosynthetic process"/>
    <property type="evidence" value="ECO:0007669"/>
    <property type="project" value="UniProtKB-UniRule"/>
</dbReference>
<dbReference type="GO" id="GO:0015949">
    <property type="term" value="P:nucleobase-containing small molecule interconversion"/>
    <property type="evidence" value="ECO:0007669"/>
    <property type="project" value="TreeGrafter"/>
</dbReference>
<dbReference type="CDD" id="cd07557">
    <property type="entry name" value="trimeric_dUTPase"/>
    <property type="match status" value="1"/>
</dbReference>
<dbReference type="FunFam" id="2.70.40.10:FF:000001">
    <property type="entry name" value="dCTP deaminase"/>
    <property type="match status" value="1"/>
</dbReference>
<dbReference type="Gene3D" id="2.70.40.10">
    <property type="match status" value="1"/>
</dbReference>
<dbReference type="HAMAP" id="MF_00146">
    <property type="entry name" value="dCTP_deaminase"/>
    <property type="match status" value="1"/>
</dbReference>
<dbReference type="InterPro" id="IPR011962">
    <property type="entry name" value="dCTP_deaminase"/>
</dbReference>
<dbReference type="InterPro" id="IPR036157">
    <property type="entry name" value="dUTPase-like_sf"/>
</dbReference>
<dbReference type="InterPro" id="IPR033704">
    <property type="entry name" value="dUTPase_trimeric"/>
</dbReference>
<dbReference type="NCBIfam" id="TIGR02274">
    <property type="entry name" value="dCTP_deam"/>
    <property type="match status" value="1"/>
</dbReference>
<dbReference type="PANTHER" id="PTHR42680">
    <property type="entry name" value="DCTP DEAMINASE"/>
    <property type="match status" value="1"/>
</dbReference>
<dbReference type="PANTHER" id="PTHR42680:SF3">
    <property type="entry name" value="DCTP DEAMINASE"/>
    <property type="match status" value="1"/>
</dbReference>
<dbReference type="Pfam" id="PF22769">
    <property type="entry name" value="DCD"/>
    <property type="match status" value="1"/>
</dbReference>
<dbReference type="SUPFAM" id="SSF51283">
    <property type="entry name" value="dUTPase-like"/>
    <property type="match status" value="1"/>
</dbReference>
<gene>
    <name evidence="1" type="primary">dcd</name>
    <name type="ordered locus">XC_1548</name>
</gene>
<reference key="1">
    <citation type="journal article" date="2005" name="Genome Res.">
        <title>Comparative and functional genomic analyses of the pathogenicity of phytopathogen Xanthomonas campestris pv. campestris.</title>
        <authorList>
            <person name="Qian W."/>
            <person name="Jia Y."/>
            <person name="Ren S.-X."/>
            <person name="He Y.-Q."/>
            <person name="Feng J.-X."/>
            <person name="Lu L.-F."/>
            <person name="Sun Q."/>
            <person name="Ying G."/>
            <person name="Tang D.-J."/>
            <person name="Tang H."/>
            <person name="Wu W."/>
            <person name="Hao P."/>
            <person name="Wang L."/>
            <person name="Jiang B.-L."/>
            <person name="Zeng S."/>
            <person name="Gu W.-Y."/>
            <person name="Lu G."/>
            <person name="Rong L."/>
            <person name="Tian Y."/>
            <person name="Yao Z."/>
            <person name="Fu G."/>
            <person name="Chen B."/>
            <person name="Fang R."/>
            <person name="Qiang B."/>
            <person name="Chen Z."/>
            <person name="Zhao G.-P."/>
            <person name="Tang J.-L."/>
            <person name="He C."/>
        </authorList>
    </citation>
    <scope>NUCLEOTIDE SEQUENCE [LARGE SCALE GENOMIC DNA]</scope>
    <source>
        <strain>8004</strain>
    </source>
</reference>
<sequence length="189" mass="21313">MSIKSDRWIKRMAEQHAMIEPFEPGQIKHDAAGQRIVSFGTSSYGYDVRCSREFKIFTNINSTIVDPKHFDPGSFVDIESDVCIIPPNSFALARTVEYFRIPRDTLVVCLGKSTYARCGIIVNVTPLEPEWEGRVTLEFSNTTPLPARIYANEGVAQMLFFQSDEVCETSYKDRGGKYQGQTGVTLPRT</sequence>
<comment type="function">
    <text evidence="1">Catalyzes the deamination of dCTP to dUTP.</text>
</comment>
<comment type="catalytic activity">
    <reaction evidence="1">
        <text>dCTP + H2O + H(+) = dUTP + NH4(+)</text>
        <dbReference type="Rhea" id="RHEA:22680"/>
        <dbReference type="ChEBI" id="CHEBI:15377"/>
        <dbReference type="ChEBI" id="CHEBI:15378"/>
        <dbReference type="ChEBI" id="CHEBI:28938"/>
        <dbReference type="ChEBI" id="CHEBI:61481"/>
        <dbReference type="ChEBI" id="CHEBI:61555"/>
        <dbReference type="EC" id="3.5.4.13"/>
    </reaction>
</comment>
<comment type="pathway">
    <text evidence="1">Pyrimidine metabolism; dUMP biosynthesis; dUMP from dCTP (dUTP route): step 1/2.</text>
</comment>
<comment type="subunit">
    <text evidence="1">Homotrimer.</text>
</comment>
<comment type="similarity">
    <text evidence="1">Belongs to the dCTP deaminase family.</text>
</comment>
<organism>
    <name type="scientific">Xanthomonas campestris pv. campestris (strain 8004)</name>
    <dbReference type="NCBI Taxonomy" id="314565"/>
    <lineage>
        <taxon>Bacteria</taxon>
        <taxon>Pseudomonadati</taxon>
        <taxon>Pseudomonadota</taxon>
        <taxon>Gammaproteobacteria</taxon>
        <taxon>Lysobacterales</taxon>
        <taxon>Lysobacteraceae</taxon>
        <taxon>Xanthomonas</taxon>
    </lineage>
</organism>
<protein>
    <recommendedName>
        <fullName evidence="1">dCTP deaminase</fullName>
        <ecNumber evidence="1">3.5.4.13</ecNumber>
    </recommendedName>
    <alternativeName>
        <fullName evidence="1">Deoxycytidine triphosphate deaminase</fullName>
    </alternativeName>
</protein>
<proteinExistence type="inferred from homology"/>
<feature type="chain" id="PRO_1000009830" description="dCTP deaminase">
    <location>
        <begin position="1"/>
        <end position="189"/>
    </location>
</feature>
<feature type="active site" description="Proton donor/acceptor" evidence="1">
    <location>
        <position position="138"/>
    </location>
</feature>
<feature type="binding site" evidence="1">
    <location>
        <begin position="112"/>
        <end position="117"/>
    </location>
    <ligand>
        <name>dCTP</name>
        <dbReference type="ChEBI" id="CHEBI:61481"/>
    </ligand>
</feature>
<feature type="binding site" evidence="1">
    <location>
        <begin position="136"/>
        <end position="138"/>
    </location>
    <ligand>
        <name>dCTP</name>
        <dbReference type="ChEBI" id="CHEBI:61481"/>
    </ligand>
</feature>
<feature type="binding site" evidence="1">
    <location>
        <position position="157"/>
    </location>
    <ligand>
        <name>dCTP</name>
        <dbReference type="ChEBI" id="CHEBI:61481"/>
    </ligand>
</feature>
<feature type="binding site" evidence="1">
    <location>
        <position position="171"/>
    </location>
    <ligand>
        <name>dCTP</name>
        <dbReference type="ChEBI" id="CHEBI:61481"/>
    </ligand>
</feature>
<feature type="binding site" evidence="1">
    <location>
        <position position="181"/>
    </location>
    <ligand>
        <name>dCTP</name>
        <dbReference type="ChEBI" id="CHEBI:61481"/>
    </ligand>
</feature>